<feature type="chain" id="PRO_1000092799" description="Heat-inducible transcription repressor HrcA">
    <location>
        <begin position="1"/>
        <end position="339"/>
    </location>
</feature>
<protein>
    <recommendedName>
        <fullName evidence="1">Heat-inducible transcription repressor HrcA</fullName>
    </recommendedName>
</protein>
<evidence type="ECO:0000255" key="1">
    <source>
        <dbReference type="HAMAP-Rule" id="MF_00081"/>
    </source>
</evidence>
<sequence>MLDPRAQTLLKTLIERYIAEGQPVGSRTLSRYSGLELSPATIRNVMSDLEELGLVISPHTSAGRIPTPRGYRLFVDTMLTVEPSADEDAVMRAVKTTLQPGEPQKVVAAAASVLSNLSQFAGVILTPRRSHVFKQIEFLRLSDKRILLIIVTPEGDVQNRIMATQRDFTPSQLVEASNYINAHFAGLSFDEVRRRLREEIDELRGDMTTLMHAAVTASTDVTDTGETVLISGERKLLEVADLSSDMARLRKLFDVFDQKTSLLQLLDVSSHAQGVQIFIGGESNLVPIEEMSVVTAPYEVNGKIVGTLGVIGPTRMAYNRVIPIVDITARLLSMTLSQQ</sequence>
<organism>
    <name type="scientific">Paraburkholderia phymatum (strain DSM 17167 / CIP 108236 / LMG 21445 / STM815)</name>
    <name type="common">Burkholderia phymatum</name>
    <dbReference type="NCBI Taxonomy" id="391038"/>
    <lineage>
        <taxon>Bacteria</taxon>
        <taxon>Pseudomonadati</taxon>
        <taxon>Pseudomonadota</taxon>
        <taxon>Betaproteobacteria</taxon>
        <taxon>Burkholderiales</taxon>
        <taxon>Burkholderiaceae</taxon>
        <taxon>Paraburkholderia</taxon>
    </lineage>
</organism>
<comment type="function">
    <text evidence="1">Negative regulator of class I heat shock genes (grpE-dnaK-dnaJ and groELS operons). Prevents heat-shock induction of these operons.</text>
</comment>
<comment type="similarity">
    <text evidence="1">Belongs to the HrcA family.</text>
</comment>
<accession>B2JGE8</accession>
<dbReference type="EMBL" id="CP001043">
    <property type="protein sequence ID" value="ACC71676.1"/>
    <property type="molecule type" value="Genomic_DNA"/>
</dbReference>
<dbReference type="RefSeq" id="WP_012401880.1">
    <property type="nucleotide sequence ID" value="NC_010622.1"/>
</dbReference>
<dbReference type="SMR" id="B2JGE8"/>
<dbReference type="STRING" id="391038.Bphy_2503"/>
<dbReference type="KEGG" id="bph:Bphy_2503"/>
<dbReference type="eggNOG" id="COG1420">
    <property type="taxonomic scope" value="Bacteria"/>
</dbReference>
<dbReference type="HOGENOM" id="CLU_050019_0_0_4"/>
<dbReference type="OrthoDB" id="9783139at2"/>
<dbReference type="Proteomes" id="UP000001192">
    <property type="component" value="Chromosome 1"/>
</dbReference>
<dbReference type="GO" id="GO:0003677">
    <property type="term" value="F:DNA binding"/>
    <property type="evidence" value="ECO:0007669"/>
    <property type="project" value="InterPro"/>
</dbReference>
<dbReference type="GO" id="GO:0045892">
    <property type="term" value="P:negative regulation of DNA-templated transcription"/>
    <property type="evidence" value="ECO:0007669"/>
    <property type="project" value="UniProtKB-UniRule"/>
</dbReference>
<dbReference type="Gene3D" id="3.30.450.40">
    <property type="match status" value="1"/>
</dbReference>
<dbReference type="Gene3D" id="3.30.390.60">
    <property type="entry name" value="Heat-inducible transcription repressor hrca homolog, domain 3"/>
    <property type="match status" value="1"/>
</dbReference>
<dbReference type="Gene3D" id="1.10.10.10">
    <property type="entry name" value="Winged helix-like DNA-binding domain superfamily/Winged helix DNA-binding domain"/>
    <property type="match status" value="1"/>
</dbReference>
<dbReference type="HAMAP" id="MF_00081">
    <property type="entry name" value="HrcA"/>
    <property type="match status" value="1"/>
</dbReference>
<dbReference type="InterPro" id="IPR029016">
    <property type="entry name" value="GAF-like_dom_sf"/>
</dbReference>
<dbReference type="InterPro" id="IPR002571">
    <property type="entry name" value="HrcA"/>
</dbReference>
<dbReference type="InterPro" id="IPR021153">
    <property type="entry name" value="HrcA_C"/>
</dbReference>
<dbReference type="InterPro" id="IPR036388">
    <property type="entry name" value="WH-like_DNA-bd_sf"/>
</dbReference>
<dbReference type="InterPro" id="IPR036390">
    <property type="entry name" value="WH_DNA-bd_sf"/>
</dbReference>
<dbReference type="InterPro" id="IPR005104">
    <property type="entry name" value="WHTH_HrcA_DNA-bd"/>
</dbReference>
<dbReference type="InterPro" id="IPR023120">
    <property type="entry name" value="WHTH_transcript_rep_HrcA_IDD"/>
</dbReference>
<dbReference type="NCBIfam" id="TIGR00331">
    <property type="entry name" value="hrcA"/>
    <property type="match status" value="1"/>
</dbReference>
<dbReference type="PANTHER" id="PTHR34824">
    <property type="entry name" value="HEAT-INDUCIBLE TRANSCRIPTION REPRESSOR HRCA"/>
    <property type="match status" value="1"/>
</dbReference>
<dbReference type="PANTHER" id="PTHR34824:SF1">
    <property type="entry name" value="HEAT-INDUCIBLE TRANSCRIPTION REPRESSOR HRCA"/>
    <property type="match status" value="1"/>
</dbReference>
<dbReference type="Pfam" id="PF01628">
    <property type="entry name" value="HrcA"/>
    <property type="match status" value="1"/>
</dbReference>
<dbReference type="Pfam" id="PF03444">
    <property type="entry name" value="HrcA_DNA-bdg"/>
    <property type="match status" value="1"/>
</dbReference>
<dbReference type="PIRSF" id="PIRSF005485">
    <property type="entry name" value="HrcA"/>
    <property type="match status" value="1"/>
</dbReference>
<dbReference type="SUPFAM" id="SSF55781">
    <property type="entry name" value="GAF domain-like"/>
    <property type="match status" value="1"/>
</dbReference>
<dbReference type="SUPFAM" id="SSF46785">
    <property type="entry name" value="Winged helix' DNA-binding domain"/>
    <property type="match status" value="1"/>
</dbReference>
<reference key="1">
    <citation type="journal article" date="2014" name="Stand. Genomic Sci.">
        <title>Complete genome sequence of Burkholderia phymatum STM815(T), a broad host range and efficient nitrogen-fixing symbiont of Mimosa species.</title>
        <authorList>
            <person name="Moulin L."/>
            <person name="Klonowska A."/>
            <person name="Caroline B."/>
            <person name="Booth K."/>
            <person name="Vriezen J.A."/>
            <person name="Melkonian R."/>
            <person name="James E.K."/>
            <person name="Young J.P."/>
            <person name="Bena G."/>
            <person name="Hauser L."/>
            <person name="Land M."/>
            <person name="Kyrpides N."/>
            <person name="Bruce D."/>
            <person name="Chain P."/>
            <person name="Copeland A."/>
            <person name="Pitluck S."/>
            <person name="Woyke T."/>
            <person name="Lizotte-Waniewski M."/>
            <person name="Bristow J."/>
            <person name="Riley M."/>
        </authorList>
    </citation>
    <scope>NUCLEOTIDE SEQUENCE [LARGE SCALE GENOMIC DNA]</scope>
    <source>
        <strain>DSM 17167 / CIP 108236 / LMG 21445 / STM815</strain>
    </source>
</reference>
<proteinExistence type="inferred from homology"/>
<gene>
    <name evidence="1" type="primary">hrcA</name>
    <name type="ordered locus">Bphy_2503</name>
</gene>
<name>HRCA_PARP8</name>
<keyword id="KW-1185">Reference proteome</keyword>
<keyword id="KW-0678">Repressor</keyword>
<keyword id="KW-0346">Stress response</keyword>
<keyword id="KW-0804">Transcription</keyword>
<keyword id="KW-0805">Transcription regulation</keyword>